<gene>
    <name evidence="1" type="primary">rpl29</name>
    <name type="ordered locus">TSIB_0295</name>
</gene>
<organism>
    <name type="scientific">Thermococcus sibiricus (strain DSM 12597 / MM 739)</name>
    <dbReference type="NCBI Taxonomy" id="604354"/>
    <lineage>
        <taxon>Archaea</taxon>
        <taxon>Methanobacteriati</taxon>
        <taxon>Methanobacteriota</taxon>
        <taxon>Thermococci</taxon>
        <taxon>Thermococcales</taxon>
        <taxon>Thermococcaceae</taxon>
        <taxon>Thermococcus</taxon>
    </lineage>
</organism>
<evidence type="ECO:0000255" key="1">
    <source>
        <dbReference type="HAMAP-Rule" id="MF_00374"/>
    </source>
</evidence>
<evidence type="ECO:0000305" key="2"/>
<reference key="1">
    <citation type="journal article" date="2009" name="Appl. Environ. Microbiol.">
        <title>Metabolic versatility and indigenous origin of the archaeon Thermococcus sibiricus, isolated from a siberian oil reservoir, as revealed by genome analysis.</title>
        <authorList>
            <person name="Mardanov A.V."/>
            <person name="Ravin N.V."/>
            <person name="Svetlitchnyi V.A."/>
            <person name="Beletsky A.V."/>
            <person name="Miroshnichenko M.L."/>
            <person name="Bonch-Osmolovskaya E.A."/>
            <person name="Skryabin K.G."/>
        </authorList>
    </citation>
    <scope>NUCLEOTIDE SEQUENCE [LARGE SCALE GENOMIC DNA]</scope>
    <source>
        <strain>DSM 12597 / MM 739</strain>
    </source>
</reference>
<dbReference type="EMBL" id="CP001463">
    <property type="protein sequence ID" value="ACS89361.1"/>
    <property type="molecule type" value="Genomic_DNA"/>
</dbReference>
<dbReference type="SMR" id="C6A166"/>
<dbReference type="STRING" id="604354.TSIB_0295"/>
<dbReference type="GeneID" id="8095268"/>
<dbReference type="KEGG" id="tsi:TSIB_0295"/>
<dbReference type="eggNOG" id="arCOG00785">
    <property type="taxonomic scope" value="Archaea"/>
</dbReference>
<dbReference type="HOGENOM" id="CLU_158491_2_2_2"/>
<dbReference type="Proteomes" id="UP000009079">
    <property type="component" value="Chromosome"/>
</dbReference>
<dbReference type="GO" id="GO:1990904">
    <property type="term" value="C:ribonucleoprotein complex"/>
    <property type="evidence" value="ECO:0007669"/>
    <property type="project" value="UniProtKB-KW"/>
</dbReference>
<dbReference type="GO" id="GO:0005840">
    <property type="term" value="C:ribosome"/>
    <property type="evidence" value="ECO:0007669"/>
    <property type="project" value="UniProtKB-KW"/>
</dbReference>
<dbReference type="GO" id="GO:0003735">
    <property type="term" value="F:structural constituent of ribosome"/>
    <property type="evidence" value="ECO:0007669"/>
    <property type="project" value="InterPro"/>
</dbReference>
<dbReference type="GO" id="GO:0006412">
    <property type="term" value="P:translation"/>
    <property type="evidence" value="ECO:0007669"/>
    <property type="project" value="UniProtKB-UniRule"/>
</dbReference>
<dbReference type="CDD" id="cd00427">
    <property type="entry name" value="Ribosomal_L29_HIP"/>
    <property type="match status" value="1"/>
</dbReference>
<dbReference type="Gene3D" id="1.10.287.310">
    <property type="match status" value="1"/>
</dbReference>
<dbReference type="HAMAP" id="MF_00374">
    <property type="entry name" value="Ribosomal_uL29"/>
    <property type="match status" value="1"/>
</dbReference>
<dbReference type="InterPro" id="IPR001854">
    <property type="entry name" value="Ribosomal_uL29"/>
</dbReference>
<dbReference type="InterPro" id="IPR018254">
    <property type="entry name" value="Ribosomal_uL29_CS"/>
</dbReference>
<dbReference type="InterPro" id="IPR036049">
    <property type="entry name" value="Ribosomal_uL29_sf"/>
</dbReference>
<dbReference type="NCBIfam" id="TIGR00012">
    <property type="entry name" value="L29"/>
    <property type="match status" value="1"/>
</dbReference>
<dbReference type="Pfam" id="PF00831">
    <property type="entry name" value="Ribosomal_L29"/>
    <property type="match status" value="1"/>
</dbReference>
<dbReference type="SUPFAM" id="SSF46561">
    <property type="entry name" value="Ribosomal protein L29 (L29p)"/>
    <property type="match status" value="1"/>
</dbReference>
<dbReference type="PROSITE" id="PS00579">
    <property type="entry name" value="RIBOSOMAL_L29"/>
    <property type="match status" value="1"/>
</dbReference>
<protein>
    <recommendedName>
        <fullName evidence="1">Large ribosomal subunit protein uL29</fullName>
    </recommendedName>
    <alternativeName>
        <fullName evidence="2">50S ribosomal protein L29</fullName>
    </alternativeName>
</protein>
<name>RL29_THESM</name>
<comment type="similarity">
    <text evidence="1">Belongs to the universal ribosomal protein uL29 family.</text>
</comment>
<feature type="chain" id="PRO_1000205641" description="Large ribosomal subunit protein uL29">
    <location>
        <begin position="1"/>
        <end position="66"/>
    </location>
</feature>
<keyword id="KW-1185">Reference proteome</keyword>
<keyword id="KW-0687">Ribonucleoprotein</keyword>
<keyword id="KW-0689">Ribosomal protein</keyword>
<proteinExistence type="inferred from homology"/>
<accession>C6A166</accession>
<sequence>MKPSEIREMNLEEIEKKIIELRLELAKERGMLTMGTSLENPMVIRDLRRDIARLLTIKKEKLRSKR</sequence>